<dbReference type="EMBL" id="EF508371">
    <property type="protein sequence ID" value="ABO70761.1"/>
    <property type="molecule type" value="Genomic_DNA"/>
</dbReference>
<dbReference type="RefSeq" id="YP_001293573.1">
    <property type="nucleotide sequence ID" value="NC_009573.1"/>
</dbReference>
<dbReference type="SMR" id="A6MVZ4"/>
<dbReference type="GeneID" id="5228515"/>
<dbReference type="GO" id="GO:0009535">
    <property type="term" value="C:chloroplast thylakoid membrane"/>
    <property type="evidence" value="ECO:0007669"/>
    <property type="project" value="UniProtKB-SubCell"/>
</dbReference>
<dbReference type="GO" id="GO:0009512">
    <property type="term" value="C:cytochrome b6f complex"/>
    <property type="evidence" value="ECO:0007669"/>
    <property type="project" value="InterPro"/>
</dbReference>
<dbReference type="GO" id="GO:0045158">
    <property type="term" value="F:electron transporter, transferring electrons within cytochrome b6/f complex of photosystem II activity"/>
    <property type="evidence" value="ECO:0007669"/>
    <property type="project" value="UniProtKB-UniRule"/>
</dbReference>
<dbReference type="GO" id="GO:0017004">
    <property type="term" value="P:cytochrome complex assembly"/>
    <property type="evidence" value="ECO:0007669"/>
    <property type="project" value="UniProtKB-UniRule"/>
</dbReference>
<dbReference type="GO" id="GO:0015979">
    <property type="term" value="P:photosynthesis"/>
    <property type="evidence" value="ECO:0007669"/>
    <property type="project" value="UniProtKB-KW"/>
</dbReference>
<dbReference type="HAMAP" id="MF_00432">
    <property type="entry name" value="Cytb6_f_PetG"/>
    <property type="match status" value="1"/>
</dbReference>
<dbReference type="InterPro" id="IPR003683">
    <property type="entry name" value="Cyt_6/f_cplx_su5"/>
</dbReference>
<dbReference type="InterPro" id="IPR036099">
    <property type="entry name" value="Cyt_6/f_cplx_su5_sf"/>
</dbReference>
<dbReference type="NCBIfam" id="NF001907">
    <property type="entry name" value="PRK00665.1"/>
    <property type="match status" value="1"/>
</dbReference>
<dbReference type="Pfam" id="PF02529">
    <property type="entry name" value="PetG"/>
    <property type="match status" value="1"/>
</dbReference>
<dbReference type="PIRSF" id="PIRSF000034">
    <property type="entry name" value="Cyt_b6-f_V"/>
    <property type="match status" value="1"/>
</dbReference>
<dbReference type="SUPFAM" id="SSF103446">
    <property type="entry name" value="PetG subunit of the cytochrome b6f complex"/>
    <property type="match status" value="1"/>
</dbReference>
<proteinExistence type="inferred from homology"/>
<keyword id="KW-0150">Chloroplast</keyword>
<keyword id="KW-0249">Electron transport</keyword>
<keyword id="KW-0472">Membrane</keyword>
<keyword id="KW-0602">Photosynthesis</keyword>
<keyword id="KW-0934">Plastid</keyword>
<keyword id="KW-0793">Thylakoid</keyword>
<keyword id="KW-0812">Transmembrane</keyword>
<keyword id="KW-1133">Transmembrane helix</keyword>
<keyword id="KW-0813">Transport</keyword>
<sequence>MIEPLLFGIVLGLIPVTLVGLFVAAYLQYRRGNQFGL</sequence>
<comment type="function">
    <text evidence="1">Component of the cytochrome b6-f complex, which mediates electron transfer between photosystem II (PSII) and photosystem I (PSI), cyclic electron flow around PSI, and state transitions. PetG is required for either the stability or assembly of the cytochrome b6-f complex.</text>
</comment>
<comment type="subunit">
    <text evidence="1">The 4 large subunits of the cytochrome b6-f complex are cytochrome b6, subunit IV (17 kDa polypeptide, PetD), cytochrome f and the Rieske protein, while the 4 small subunits are PetG, PetL, PetM and PetN. The complex functions as a dimer.</text>
</comment>
<comment type="subcellular location">
    <subcellularLocation>
        <location evidence="1">Plastid</location>
        <location evidence="1">Chloroplast thylakoid membrane</location>
        <topology evidence="1">Single-pass membrane protein</topology>
    </subcellularLocation>
</comment>
<comment type="similarity">
    <text evidence="1">Belongs to the PetG family.</text>
</comment>
<evidence type="ECO:0000255" key="1">
    <source>
        <dbReference type="HAMAP-Rule" id="MF_00432"/>
    </source>
</evidence>
<accession>A6MVZ4</accession>
<feature type="chain" id="PRO_0000355413" description="Cytochrome b6-f complex subunit 5">
    <location>
        <begin position="1"/>
        <end position="37"/>
    </location>
</feature>
<feature type="transmembrane region" description="Helical" evidence="1">
    <location>
        <begin position="5"/>
        <end position="25"/>
    </location>
</feature>
<organism>
    <name type="scientific">Rhodomonas salina</name>
    <name type="common">Cryptomonas salina</name>
    <dbReference type="NCBI Taxonomy" id="52970"/>
    <lineage>
        <taxon>Eukaryota</taxon>
        <taxon>Cryptophyceae</taxon>
        <taxon>Pyrenomonadales</taxon>
        <taxon>Pyrenomonadaceae</taxon>
        <taxon>Rhodomonas</taxon>
    </lineage>
</organism>
<gene>
    <name evidence="1" type="primary">petG</name>
</gene>
<reference key="1">
    <citation type="journal article" date="2007" name="Mol. Biol. Evol.">
        <title>Plastid genome sequence of the cryptophyte alga Rhodomonas salina CCMP1319: lateral transfer of putative DNA replication machinery and a test of chromist plastid phylogeny.</title>
        <authorList>
            <person name="Khan H."/>
            <person name="Parks N."/>
            <person name="Kozera C."/>
            <person name="Curtis B.A."/>
            <person name="Parsons B.J."/>
            <person name="Bowman S."/>
            <person name="Archibald J.M."/>
        </authorList>
    </citation>
    <scope>NUCLEOTIDE SEQUENCE [LARGE SCALE GENOMIC DNA]</scope>
    <source>
        <strain>CCMP1319 / NEPCC76 / CS-174</strain>
    </source>
</reference>
<protein>
    <recommendedName>
        <fullName evidence="1">Cytochrome b6-f complex subunit 5</fullName>
    </recommendedName>
    <alternativeName>
        <fullName evidence="1">Cytochrome b6-f complex subunit PetG</fullName>
    </alternativeName>
    <alternativeName>
        <fullName evidence="1">Cytochrome b6-f complex subunit V</fullName>
    </alternativeName>
</protein>
<geneLocation type="chloroplast"/>
<name>PETG_RHDSA</name>